<evidence type="ECO:0000255" key="1">
    <source>
        <dbReference type="HAMAP-Rule" id="MF_01589"/>
    </source>
</evidence>
<evidence type="ECO:0000305" key="2"/>
<accession>A4VIY2</accession>
<sequence length="247" mass="27810">MSHDPDRLFAQPLARVQDFVFNEDVARVFPDMIKRSVPGYPTIVENIGVIAAQFAQPNTRLYDLGCSLGAVTQALRRHVSQDNCQVIAVDNSTAMVERCREYLHAQDSMYQELLPVEVLEADILALEFQSSSLVALNFTLQFIAPEQRPALLGRIRQALVPGGALILSEKLRFEDDEEQQLLTDLHIAFKRANGYSELEIAQKRSAIENVMKPDSLETHRQRLLEAGFSKVVPWFQCLNFASLIALP</sequence>
<organism>
    <name type="scientific">Stutzerimonas stutzeri (strain A1501)</name>
    <name type="common">Pseudomonas stutzeri</name>
    <dbReference type="NCBI Taxonomy" id="379731"/>
    <lineage>
        <taxon>Bacteria</taxon>
        <taxon>Pseudomonadati</taxon>
        <taxon>Pseudomonadota</taxon>
        <taxon>Gammaproteobacteria</taxon>
        <taxon>Pseudomonadales</taxon>
        <taxon>Pseudomonadaceae</taxon>
        <taxon>Stutzerimonas</taxon>
    </lineage>
</organism>
<dbReference type="EC" id="2.1.3.-" evidence="1"/>
<dbReference type="EMBL" id="CP000304">
    <property type="protein sequence ID" value="ABP78933.1"/>
    <property type="status" value="ALT_INIT"/>
    <property type="molecule type" value="Genomic_DNA"/>
</dbReference>
<dbReference type="RefSeq" id="WP_020309057.1">
    <property type="nucleotide sequence ID" value="NC_009434.1"/>
</dbReference>
<dbReference type="SMR" id="A4VIY2"/>
<dbReference type="KEGG" id="psa:PST_1238"/>
<dbReference type="eggNOG" id="COG2226">
    <property type="taxonomic scope" value="Bacteria"/>
</dbReference>
<dbReference type="HOGENOM" id="CLU_078475_0_0_6"/>
<dbReference type="Proteomes" id="UP000000233">
    <property type="component" value="Chromosome"/>
</dbReference>
<dbReference type="GO" id="GO:0016743">
    <property type="term" value="F:carboxyl- or carbamoyltransferase activity"/>
    <property type="evidence" value="ECO:0007669"/>
    <property type="project" value="UniProtKB-UniRule"/>
</dbReference>
<dbReference type="GO" id="GO:1904047">
    <property type="term" value="F:S-adenosyl-L-methionine binding"/>
    <property type="evidence" value="ECO:0007669"/>
    <property type="project" value="UniProtKB-UniRule"/>
</dbReference>
<dbReference type="GO" id="GO:0002098">
    <property type="term" value="P:tRNA wobble uridine modification"/>
    <property type="evidence" value="ECO:0007669"/>
    <property type="project" value="InterPro"/>
</dbReference>
<dbReference type="CDD" id="cd02440">
    <property type="entry name" value="AdoMet_MTases"/>
    <property type="match status" value="1"/>
</dbReference>
<dbReference type="Gene3D" id="3.40.50.150">
    <property type="entry name" value="Vaccinia Virus protein VP39"/>
    <property type="match status" value="1"/>
</dbReference>
<dbReference type="HAMAP" id="MF_01589">
    <property type="entry name" value="Cx_SAM_synthase"/>
    <property type="match status" value="1"/>
</dbReference>
<dbReference type="InterPro" id="IPR005271">
    <property type="entry name" value="CmoA"/>
</dbReference>
<dbReference type="InterPro" id="IPR041698">
    <property type="entry name" value="Methyltransf_25"/>
</dbReference>
<dbReference type="InterPro" id="IPR029063">
    <property type="entry name" value="SAM-dependent_MTases_sf"/>
</dbReference>
<dbReference type="NCBIfam" id="TIGR00740">
    <property type="entry name" value="carboxy-S-adenosyl-L-methionine synthase CmoA"/>
    <property type="match status" value="1"/>
</dbReference>
<dbReference type="NCBIfam" id="NF011995">
    <property type="entry name" value="PRK15451.1"/>
    <property type="match status" value="1"/>
</dbReference>
<dbReference type="PANTHER" id="PTHR43861:SF2">
    <property type="entry name" value="CARBOXY-S-ADENOSYL-L-METHIONINE SYNTHASE"/>
    <property type="match status" value="1"/>
</dbReference>
<dbReference type="PANTHER" id="PTHR43861">
    <property type="entry name" value="TRANS-ACONITATE 2-METHYLTRANSFERASE-RELATED"/>
    <property type="match status" value="1"/>
</dbReference>
<dbReference type="Pfam" id="PF13649">
    <property type="entry name" value="Methyltransf_25"/>
    <property type="match status" value="1"/>
</dbReference>
<dbReference type="PIRSF" id="PIRSF006325">
    <property type="entry name" value="MeTrfase_bac"/>
    <property type="match status" value="1"/>
</dbReference>
<dbReference type="SUPFAM" id="SSF53335">
    <property type="entry name" value="S-adenosyl-L-methionine-dependent methyltransferases"/>
    <property type="match status" value="1"/>
</dbReference>
<name>CMOA_STUS1</name>
<gene>
    <name evidence="1" type="primary">cmoA</name>
    <name type="ordered locus">PST_1238</name>
</gene>
<comment type="function">
    <text evidence="1">Catalyzes the conversion of S-adenosyl-L-methionine (SAM) to carboxy-S-adenosyl-L-methionine (Cx-SAM).</text>
</comment>
<comment type="catalytic activity">
    <reaction evidence="1">
        <text>prephenate + S-adenosyl-L-methionine = carboxy-S-adenosyl-L-methionine + 3-phenylpyruvate + H2O</text>
        <dbReference type="Rhea" id="RHEA:51692"/>
        <dbReference type="ChEBI" id="CHEBI:15377"/>
        <dbReference type="ChEBI" id="CHEBI:18005"/>
        <dbReference type="ChEBI" id="CHEBI:29934"/>
        <dbReference type="ChEBI" id="CHEBI:59789"/>
        <dbReference type="ChEBI" id="CHEBI:134278"/>
    </reaction>
</comment>
<comment type="subunit">
    <text evidence="1">Homodimer.</text>
</comment>
<comment type="similarity">
    <text evidence="1">Belongs to the class I-like SAM-binding methyltransferase superfamily. Cx-SAM synthase family.</text>
</comment>
<comment type="sequence caution" evidence="2">
    <conflict type="erroneous initiation">
        <sequence resource="EMBL-CDS" id="ABP78933"/>
    </conflict>
</comment>
<proteinExistence type="inferred from homology"/>
<keyword id="KW-1185">Reference proteome</keyword>
<keyword id="KW-0949">S-adenosyl-L-methionine</keyword>
<keyword id="KW-0808">Transferase</keyword>
<reference key="1">
    <citation type="journal article" date="2008" name="Proc. Natl. Acad. Sci. U.S.A.">
        <title>Nitrogen fixation island and rhizosphere competence traits in the genome of root-associated Pseudomonas stutzeri A1501.</title>
        <authorList>
            <person name="Yan Y."/>
            <person name="Yang J."/>
            <person name="Dou Y."/>
            <person name="Chen M."/>
            <person name="Ping S."/>
            <person name="Peng J."/>
            <person name="Lu W."/>
            <person name="Zhang W."/>
            <person name="Yao Z."/>
            <person name="Li H."/>
            <person name="Liu W."/>
            <person name="He S."/>
            <person name="Geng L."/>
            <person name="Zhang X."/>
            <person name="Yang F."/>
            <person name="Yu H."/>
            <person name="Zhan Y."/>
            <person name="Li D."/>
            <person name="Lin Z."/>
            <person name="Wang Y."/>
            <person name="Elmerich C."/>
            <person name="Lin M."/>
            <person name="Jin Q."/>
        </authorList>
    </citation>
    <scope>NUCLEOTIDE SEQUENCE [LARGE SCALE GENOMIC DNA]</scope>
    <source>
        <strain>A1501</strain>
    </source>
</reference>
<feature type="chain" id="PRO_0000314362" description="Carboxy-S-adenosyl-L-methionine synthase">
    <location>
        <begin position="1"/>
        <end position="247"/>
    </location>
</feature>
<feature type="binding site" evidence="1">
    <location>
        <position position="40"/>
    </location>
    <ligand>
        <name>S-adenosyl-L-methionine</name>
        <dbReference type="ChEBI" id="CHEBI:59789"/>
    </ligand>
</feature>
<feature type="binding site" evidence="1">
    <location>
        <begin position="65"/>
        <end position="67"/>
    </location>
    <ligand>
        <name>S-adenosyl-L-methionine</name>
        <dbReference type="ChEBI" id="CHEBI:59789"/>
    </ligand>
</feature>
<feature type="binding site" evidence="1">
    <location>
        <begin position="90"/>
        <end position="91"/>
    </location>
    <ligand>
        <name>S-adenosyl-L-methionine</name>
        <dbReference type="ChEBI" id="CHEBI:59789"/>
    </ligand>
</feature>
<feature type="binding site" evidence="1">
    <location>
        <begin position="122"/>
        <end position="123"/>
    </location>
    <ligand>
        <name>S-adenosyl-L-methionine</name>
        <dbReference type="ChEBI" id="CHEBI:59789"/>
    </ligand>
</feature>
<feature type="binding site" evidence="1">
    <location>
        <position position="137"/>
    </location>
    <ligand>
        <name>S-adenosyl-L-methionine</name>
        <dbReference type="ChEBI" id="CHEBI:59789"/>
    </ligand>
</feature>
<feature type="binding site" evidence="1">
    <location>
        <position position="204"/>
    </location>
    <ligand>
        <name>S-adenosyl-L-methionine</name>
        <dbReference type="ChEBI" id="CHEBI:59789"/>
    </ligand>
</feature>
<protein>
    <recommendedName>
        <fullName evidence="1">Carboxy-S-adenosyl-L-methionine synthase</fullName>
        <shortName evidence="1">Cx-SAM synthase</shortName>
        <ecNumber evidence="1">2.1.3.-</ecNumber>
    </recommendedName>
</protein>